<evidence type="ECO:0000255" key="1">
    <source>
        <dbReference type="HAMAP-Rule" id="MF_01395"/>
    </source>
</evidence>
<evidence type="ECO:0000255" key="2">
    <source>
        <dbReference type="PROSITE-ProRule" id="PRU01136"/>
    </source>
</evidence>
<dbReference type="EC" id="2.1.3.15" evidence="1"/>
<dbReference type="EMBL" id="CP000075">
    <property type="protein sequence ID" value="AAY36712.1"/>
    <property type="molecule type" value="Genomic_DNA"/>
</dbReference>
<dbReference type="RefSeq" id="WP_003318491.1">
    <property type="nucleotide sequence ID" value="NC_007005.1"/>
</dbReference>
<dbReference type="RefSeq" id="YP_234750.1">
    <property type="nucleotide sequence ID" value="NC_007005.1"/>
</dbReference>
<dbReference type="SMR" id="Q4ZVW0"/>
<dbReference type="STRING" id="205918.Psyr_1664"/>
<dbReference type="GeneID" id="77277497"/>
<dbReference type="KEGG" id="psb:Psyr_1664"/>
<dbReference type="PATRIC" id="fig|205918.7.peg.1701"/>
<dbReference type="eggNOG" id="COG0777">
    <property type="taxonomic scope" value="Bacteria"/>
</dbReference>
<dbReference type="HOGENOM" id="CLU_015486_1_0_6"/>
<dbReference type="OrthoDB" id="9772975at2"/>
<dbReference type="UniPathway" id="UPA00655">
    <property type="reaction ID" value="UER00711"/>
</dbReference>
<dbReference type="Proteomes" id="UP000000426">
    <property type="component" value="Chromosome"/>
</dbReference>
<dbReference type="GO" id="GO:0009329">
    <property type="term" value="C:acetate CoA-transferase complex"/>
    <property type="evidence" value="ECO:0007669"/>
    <property type="project" value="TreeGrafter"/>
</dbReference>
<dbReference type="GO" id="GO:0003989">
    <property type="term" value="F:acetyl-CoA carboxylase activity"/>
    <property type="evidence" value="ECO:0007669"/>
    <property type="project" value="InterPro"/>
</dbReference>
<dbReference type="GO" id="GO:0005524">
    <property type="term" value="F:ATP binding"/>
    <property type="evidence" value="ECO:0007669"/>
    <property type="project" value="UniProtKB-KW"/>
</dbReference>
<dbReference type="GO" id="GO:0016743">
    <property type="term" value="F:carboxyl- or carbamoyltransferase activity"/>
    <property type="evidence" value="ECO:0007669"/>
    <property type="project" value="UniProtKB-UniRule"/>
</dbReference>
<dbReference type="GO" id="GO:0008270">
    <property type="term" value="F:zinc ion binding"/>
    <property type="evidence" value="ECO:0007669"/>
    <property type="project" value="UniProtKB-UniRule"/>
</dbReference>
<dbReference type="GO" id="GO:0006633">
    <property type="term" value="P:fatty acid biosynthetic process"/>
    <property type="evidence" value="ECO:0007669"/>
    <property type="project" value="UniProtKB-KW"/>
</dbReference>
<dbReference type="GO" id="GO:2001295">
    <property type="term" value="P:malonyl-CoA biosynthetic process"/>
    <property type="evidence" value="ECO:0007669"/>
    <property type="project" value="UniProtKB-UniRule"/>
</dbReference>
<dbReference type="Gene3D" id="3.90.226.10">
    <property type="entry name" value="2-enoyl-CoA Hydratase, Chain A, domain 1"/>
    <property type="match status" value="1"/>
</dbReference>
<dbReference type="HAMAP" id="MF_01395">
    <property type="entry name" value="AcetylCoA_CT_beta"/>
    <property type="match status" value="1"/>
</dbReference>
<dbReference type="InterPro" id="IPR034733">
    <property type="entry name" value="AcCoA_carboxyl_beta"/>
</dbReference>
<dbReference type="InterPro" id="IPR000438">
    <property type="entry name" value="Acetyl_CoA_COase_Trfase_b_su"/>
</dbReference>
<dbReference type="InterPro" id="IPR029045">
    <property type="entry name" value="ClpP/crotonase-like_dom_sf"/>
</dbReference>
<dbReference type="InterPro" id="IPR011762">
    <property type="entry name" value="COA_CT_N"/>
</dbReference>
<dbReference type="InterPro" id="IPR041010">
    <property type="entry name" value="Znf-ACC"/>
</dbReference>
<dbReference type="NCBIfam" id="TIGR00515">
    <property type="entry name" value="accD"/>
    <property type="match status" value="1"/>
</dbReference>
<dbReference type="PANTHER" id="PTHR42995">
    <property type="entry name" value="ACETYL-COENZYME A CARBOXYLASE CARBOXYL TRANSFERASE SUBUNIT BETA, CHLOROPLASTIC"/>
    <property type="match status" value="1"/>
</dbReference>
<dbReference type="PANTHER" id="PTHR42995:SF5">
    <property type="entry name" value="ACETYL-COENZYME A CARBOXYLASE CARBOXYL TRANSFERASE SUBUNIT BETA, CHLOROPLASTIC"/>
    <property type="match status" value="1"/>
</dbReference>
<dbReference type="Pfam" id="PF01039">
    <property type="entry name" value="Carboxyl_trans"/>
    <property type="match status" value="1"/>
</dbReference>
<dbReference type="Pfam" id="PF17848">
    <property type="entry name" value="Zn_ribbon_ACC"/>
    <property type="match status" value="1"/>
</dbReference>
<dbReference type="PRINTS" id="PR01070">
    <property type="entry name" value="ACCCTRFRASEB"/>
</dbReference>
<dbReference type="SUPFAM" id="SSF52096">
    <property type="entry name" value="ClpP/crotonase"/>
    <property type="match status" value="1"/>
</dbReference>
<dbReference type="PROSITE" id="PS50980">
    <property type="entry name" value="COA_CT_NTER"/>
    <property type="match status" value="1"/>
</dbReference>
<name>ACCD_PSEU2</name>
<protein>
    <recommendedName>
        <fullName evidence="1">Acetyl-coenzyme A carboxylase carboxyl transferase subunit beta</fullName>
        <shortName evidence="1">ACCase subunit beta</shortName>
        <shortName evidence="1">Acetyl-CoA carboxylase carboxyltransferase subunit beta</shortName>
        <ecNumber evidence="1">2.1.3.15</ecNumber>
    </recommendedName>
</protein>
<sequence length="306" mass="33524">MSNWLVDKLIPSIMRSEVKKSSVPEGLWHKCPSCEAVLYRPELEKTLDVCPKCNHHMRIGARARLNIFLDVEGREELGADLEPVDRLKFRDGKKYKDRLTAAQKQTGEKDALISMSGTLLGMPVVASAFEFSFMGGSMGAIVGERFVRAANYALENRCPFVCFAASGGARMQEALISLMQMAKTSAVLARLREEGLPFISVLTDPVYGGVSASLAMLGDVIVAEPKALIGFAGPRVIEQTVREKLPEGFQRSEFLLDHGAIDMIVSRSELRPRLGNLLAQMMNLPTPRFVAPVIEPIVVPPAPATI</sequence>
<accession>Q4ZVW0</accession>
<reference key="1">
    <citation type="journal article" date="2005" name="Proc. Natl. Acad. Sci. U.S.A.">
        <title>Comparison of the complete genome sequences of Pseudomonas syringae pv. syringae B728a and pv. tomato DC3000.</title>
        <authorList>
            <person name="Feil H."/>
            <person name="Feil W.S."/>
            <person name="Chain P."/>
            <person name="Larimer F."/>
            <person name="Dibartolo G."/>
            <person name="Copeland A."/>
            <person name="Lykidis A."/>
            <person name="Trong S."/>
            <person name="Nolan M."/>
            <person name="Goltsman E."/>
            <person name="Thiel J."/>
            <person name="Malfatti S."/>
            <person name="Loper J.E."/>
            <person name="Lapidus A."/>
            <person name="Detter J.C."/>
            <person name="Land M."/>
            <person name="Richardson P.M."/>
            <person name="Kyrpides N.C."/>
            <person name="Ivanova N."/>
            <person name="Lindow S.E."/>
        </authorList>
    </citation>
    <scope>NUCLEOTIDE SEQUENCE [LARGE SCALE GENOMIC DNA]</scope>
    <source>
        <strain>B728a</strain>
    </source>
</reference>
<keyword id="KW-0067">ATP-binding</keyword>
<keyword id="KW-0963">Cytoplasm</keyword>
<keyword id="KW-0275">Fatty acid biosynthesis</keyword>
<keyword id="KW-0276">Fatty acid metabolism</keyword>
<keyword id="KW-0444">Lipid biosynthesis</keyword>
<keyword id="KW-0443">Lipid metabolism</keyword>
<keyword id="KW-0479">Metal-binding</keyword>
<keyword id="KW-0547">Nucleotide-binding</keyword>
<keyword id="KW-0808">Transferase</keyword>
<keyword id="KW-0862">Zinc</keyword>
<keyword id="KW-0863">Zinc-finger</keyword>
<comment type="function">
    <text evidence="1">Component of the acetyl coenzyme A carboxylase (ACC) complex. Biotin carboxylase (BC) catalyzes the carboxylation of biotin on its carrier protein (BCCP) and then the CO(2) group is transferred by the transcarboxylase to acetyl-CoA to form malonyl-CoA.</text>
</comment>
<comment type="catalytic activity">
    <reaction evidence="1">
        <text>N(6)-carboxybiotinyl-L-lysyl-[protein] + acetyl-CoA = N(6)-biotinyl-L-lysyl-[protein] + malonyl-CoA</text>
        <dbReference type="Rhea" id="RHEA:54728"/>
        <dbReference type="Rhea" id="RHEA-COMP:10505"/>
        <dbReference type="Rhea" id="RHEA-COMP:10506"/>
        <dbReference type="ChEBI" id="CHEBI:57288"/>
        <dbReference type="ChEBI" id="CHEBI:57384"/>
        <dbReference type="ChEBI" id="CHEBI:83144"/>
        <dbReference type="ChEBI" id="CHEBI:83145"/>
        <dbReference type="EC" id="2.1.3.15"/>
    </reaction>
</comment>
<comment type="cofactor">
    <cofactor evidence="1">
        <name>Zn(2+)</name>
        <dbReference type="ChEBI" id="CHEBI:29105"/>
    </cofactor>
    <text evidence="1">Binds 1 zinc ion per subunit.</text>
</comment>
<comment type="pathway">
    <text evidence="1">Lipid metabolism; malonyl-CoA biosynthesis; malonyl-CoA from acetyl-CoA: step 1/1.</text>
</comment>
<comment type="subunit">
    <text evidence="1">Acetyl-CoA carboxylase is a heterohexamer composed of biotin carboxyl carrier protein (AccB), biotin carboxylase (AccC) and two subunits each of ACCase subunit alpha (AccA) and ACCase subunit beta (AccD).</text>
</comment>
<comment type="subcellular location">
    <subcellularLocation>
        <location evidence="1">Cytoplasm</location>
    </subcellularLocation>
</comment>
<comment type="similarity">
    <text evidence="1">Belongs to the AccD/PCCB family.</text>
</comment>
<gene>
    <name evidence="1" type="primary">accD</name>
    <name type="ordered locus">Psyr_1664</name>
</gene>
<organism>
    <name type="scientific">Pseudomonas syringae pv. syringae (strain B728a)</name>
    <dbReference type="NCBI Taxonomy" id="205918"/>
    <lineage>
        <taxon>Bacteria</taxon>
        <taxon>Pseudomonadati</taxon>
        <taxon>Pseudomonadota</taxon>
        <taxon>Gammaproteobacteria</taxon>
        <taxon>Pseudomonadales</taxon>
        <taxon>Pseudomonadaceae</taxon>
        <taxon>Pseudomonas</taxon>
        <taxon>Pseudomonas syringae</taxon>
    </lineage>
</organism>
<feature type="chain" id="PRO_0000359046" description="Acetyl-coenzyme A carboxylase carboxyl transferase subunit beta">
    <location>
        <begin position="1"/>
        <end position="306"/>
    </location>
</feature>
<feature type="domain" description="CoA carboxyltransferase N-terminal" evidence="2">
    <location>
        <begin position="27"/>
        <end position="296"/>
    </location>
</feature>
<feature type="zinc finger region" description="C4-type" evidence="1">
    <location>
        <begin position="31"/>
        <end position="53"/>
    </location>
</feature>
<feature type="binding site" evidence="1">
    <location>
        <position position="31"/>
    </location>
    <ligand>
        <name>Zn(2+)</name>
        <dbReference type="ChEBI" id="CHEBI:29105"/>
    </ligand>
</feature>
<feature type="binding site" evidence="1">
    <location>
        <position position="34"/>
    </location>
    <ligand>
        <name>Zn(2+)</name>
        <dbReference type="ChEBI" id="CHEBI:29105"/>
    </ligand>
</feature>
<feature type="binding site" evidence="1">
    <location>
        <position position="50"/>
    </location>
    <ligand>
        <name>Zn(2+)</name>
        <dbReference type="ChEBI" id="CHEBI:29105"/>
    </ligand>
</feature>
<feature type="binding site" evidence="1">
    <location>
        <position position="53"/>
    </location>
    <ligand>
        <name>Zn(2+)</name>
        <dbReference type="ChEBI" id="CHEBI:29105"/>
    </ligand>
</feature>
<proteinExistence type="inferred from homology"/>